<comment type="function">
    <text evidence="1">Catalyzes carboxymethyl transfer from carboxy-S-adenosyl-L-methionine (Cx-SAM) to 5-hydroxyuridine (ho5U) to form 5-carboxymethoxyuridine (cmo5U) at position 34 in tRNAs.</text>
</comment>
<comment type="catalytic activity">
    <reaction evidence="1">
        <text>carboxy-S-adenosyl-L-methionine + 5-hydroxyuridine(34) in tRNA = 5-carboxymethoxyuridine(34) in tRNA + S-adenosyl-L-homocysteine + H(+)</text>
        <dbReference type="Rhea" id="RHEA:52848"/>
        <dbReference type="Rhea" id="RHEA-COMP:13381"/>
        <dbReference type="Rhea" id="RHEA-COMP:13383"/>
        <dbReference type="ChEBI" id="CHEBI:15378"/>
        <dbReference type="ChEBI" id="CHEBI:57856"/>
        <dbReference type="ChEBI" id="CHEBI:134278"/>
        <dbReference type="ChEBI" id="CHEBI:136877"/>
        <dbReference type="ChEBI" id="CHEBI:136879"/>
    </reaction>
</comment>
<comment type="subunit">
    <text evidence="1">Homotetramer.</text>
</comment>
<comment type="similarity">
    <text evidence="1">Belongs to the class I-like SAM-binding methyltransferase superfamily. CmoB family.</text>
</comment>
<feature type="chain" id="PRO_0000313974" description="tRNA U34 carboxymethyltransferase">
    <location>
        <begin position="1"/>
        <end position="332"/>
    </location>
</feature>
<feature type="binding site" evidence="1">
    <location>
        <position position="91"/>
    </location>
    <ligand>
        <name>carboxy-S-adenosyl-L-methionine</name>
        <dbReference type="ChEBI" id="CHEBI:134278"/>
    </ligand>
</feature>
<feature type="binding site" evidence="1">
    <location>
        <position position="105"/>
    </location>
    <ligand>
        <name>carboxy-S-adenosyl-L-methionine</name>
        <dbReference type="ChEBI" id="CHEBI:134278"/>
    </ligand>
</feature>
<feature type="binding site" evidence="1">
    <location>
        <position position="110"/>
    </location>
    <ligand>
        <name>carboxy-S-adenosyl-L-methionine</name>
        <dbReference type="ChEBI" id="CHEBI:134278"/>
    </ligand>
</feature>
<feature type="binding site" evidence="1">
    <location>
        <position position="130"/>
    </location>
    <ligand>
        <name>carboxy-S-adenosyl-L-methionine</name>
        <dbReference type="ChEBI" id="CHEBI:134278"/>
    </ligand>
</feature>
<feature type="binding site" evidence="1">
    <location>
        <begin position="152"/>
        <end position="154"/>
    </location>
    <ligand>
        <name>carboxy-S-adenosyl-L-methionine</name>
        <dbReference type="ChEBI" id="CHEBI:134278"/>
    </ligand>
</feature>
<feature type="binding site" evidence="1">
    <location>
        <begin position="181"/>
        <end position="182"/>
    </location>
    <ligand>
        <name>carboxy-S-adenosyl-L-methionine</name>
        <dbReference type="ChEBI" id="CHEBI:134278"/>
    </ligand>
</feature>
<feature type="binding site" evidence="1">
    <location>
        <position position="196"/>
    </location>
    <ligand>
        <name>carboxy-S-adenosyl-L-methionine</name>
        <dbReference type="ChEBI" id="CHEBI:134278"/>
    </ligand>
</feature>
<feature type="binding site" evidence="1">
    <location>
        <position position="200"/>
    </location>
    <ligand>
        <name>carboxy-S-adenosyl-L-methionine</name>
        <dbReference type="ChEBI" id="CHEBI:134278"/>
    </ligand>
</feature>
<feature type="binding site" evidence="1">
    <location>
        <position position="315"/>
    </location>
    <ligand>
        <name>carboxy-S-adenosyl-L-methionine</name>
        <dbReference type="ChEBI" id="CHEBI:134278"/>
    </ligand>
</feature>
<proteinExistence type="inferred from homology"/>
<accession>A1RJQ9</accession>
<evidence type="ECO:0000255" key="1">
    <source>
        <dbReference type="HAMAP-Rule" id="MF_01590"/>
    </source>
</evidence>
<sequence>MISFSSFYQQIADSNLQHWLETLPSILGKWQRDHKHGNLPKWEKVLNKLHYPAPDQVDFVDSVTVGSGEQLSPGEKEKLENLLRLFMPWRKGPFHIHGIHIDTEWRSDWKWDRVKQHISPLNNRTVLDVGCGSGYHMWRMLGAGAKRVVGIDPSPLFLCQFEAVKRLAGAHHPVHLLPLGIEELPPLDAFDTVFSMGVLYHRRSPIDHLLQLRDQLRTGGELVLETLVIDGDENAVLVPQDRYGKMNNVWFIPSVAALMLWLKKCDFTDIRCVDTDVTALAEQRRTDWMPNESLLEYLDPTDITKTIEGYPAPKRATIIAIKNQPNQETVNG</sequence>
<name>CMOB_SHESW</name>
<organism>
    <name type="scientific">Shewanella sp. (strain W3-18-1)</name>
    <dbReference type="NCBI Taxonomy" id="351745"/>
    <lineage>
        <taxon>Bacteria</taxon>
        <taxon>Pseudomonadati</taxon>
        <taxon>Pseudomonadota</taxon>
        <taxon>Gammaproteobacteria</taxon>
        <taxon>Alteromonadales</taxon>
        <taxon>Shewanellaceae</taxon>
        <taxon>Shewanella</taxon>
    </lineage>
</organism>
<gene>
    <name evidence="1" type="primary">cmoB</name>
    <name type="ordered locus">Sputw3181_2076</name>
</gene>
<protein>
    <recommendedName>
        <fullName evidence="1">tRNA U34 carboxymethyltransferase</fullName>
        <ecNumber evidence="1">2.5.1.-</ecNumber>
    </recommendedName>
</protein>
<dbReference type="EC" id="2.5.1.-" evidence="1"/>
<dbReference type="EMBL" id="CP000503">
    <property type="protein sequence ID" value="ABM24904.1"/>
    <property type="molecule type" value="Genomic_DNA"/>
</dbReference>
<dbReference type="RefSeq" id="WP_011789375.1">
    <property type="nucleotide sequence ID" value="NC_008750.1"/>
</dbReference>
<dbReference type="SMR" id="A1RJQ9"/>
<dbReference type="KEGG" id="shw:Sputw3181_2076"/>
<dbReference type="HOGENOM" id="CLU_052665_0_0_6"/>
<dbReference type="Proteomes" id="UP000002597">
    <property type="component" value="Chromosome"/>
</dbReference>
<dbReference type="GO" id="GO:0008168">
    <property type="term" value="F:methyltransferase activity"/>
    <property type="evidence" value="ECO:0007669"/>
    <property type="project" value="TreeGrafter"/>
</dbReference>
<dbReference type="GO" id="GO:0016765">
    <property type="term" value="F:transferase activity, transferring alkyl or aryl (other than methyl) groups"/>
    <property type="evidence" value="ECO:0007669"/>
    <property type="project" value="UniProtKB-UniRule"/>
</dbReference>
<dbReference type="GO" id="GO:0002098">
    <property type="term" value="P:tRNA wobble uridine modification"/>
    <property type="evidence" value="ECO:0007669"/>
    <property type="project" value="InterPro"/>
</dbReference>
<dbReference type="CDD" id="cd02440">
    <property type="entry name" value="AdoMet_MTases"/>
    <property type="match status" value="1"/>
</dbReference>
<dbReference type="Gene3D" id="3.40.50.150">
    <property type="entry name" value="Vaccinia Virus protein VP39"/>
    <property type="match status" value="1"/>
</dbReference>
<dbReference type="HAMAP" id="MF_01590">
    <property type="entry name" value="tRNA_carboxymethyltr_CmoB"/>
    <property type="match status" value="1"/>
</dbReference>
<dbReference type="InterPro" id="IPR010017">
    <property type="entry name" value="CmoB"/>
</dbReference>
<dbReference type="InterPro" id="IPR027555">
    <property type="entry name" value="Mo5U34_MeTrfas-like"/>
</dbReference>
<dbReference type="InterPro" id="IPR029063">
    <property type="entry name" value="SAM-dependent_MTases_sf"/>
</dbReference>
<dbReference type="NCBIfam" id="NF011650">
    <property type="entry name" value="PRK15068.1"/>
    <property type="match status" value="1"/>
</dbReference>
<dbReference type="NCBIfam" id="TIGR00452">
    <property type="entry name" value="tRNA 5-methoxyuridine(34)/uridine 5-oxyacetic acid(34) synthase CmoB"/>
    <property type="match status" value="1"/>
</dbReference>
<dbReference type="PANTHER" id="PTHR43464">
    <property type="entry name" value="METHYLTRANSFERASE"/>
    <property type="match status" value="1"/>
</dbReference>
<dbReference type="PANTHER" id="PTHR43464:SF95">
    <property type="entry name" value="TRNA U34 CARBOXYMETHYLTRANSFERASE"/>
    <property type="match status" value="1"/>
</dbReference>
<dbReference type="Pfam" id="PF08003">
    <property type="entry name" value="Methyltransf_9"/>
    <property type="match status" value="1"/>
</dbReference>
<dbReference type="SUPFAM" id="SSF53335">
    <property type="entry name" value="S-adenosyl-L-methionine-dependent methyltransferases"/>
    <property type="match status" value="1"/>
</dbReference>
<reference key="1">
    <citation type="submission" date="2006-12" db="EMBL/GenBank/DDBJ databases">
        <title>Complete sequence of Shewanella sp. W3-18-1.</title>
        <authorList>
            <consortium name="US DOE Joint Genome Institute"/>
            <person name="Copeland A."/>
            <person name="Lucas S."/>
            <person name="Lapidus A."/>
            <person name="Barry K."/>
            <person name="Detter J.C."/>
            <person name="Glavina del Rio T."/>
            <person name="Hammon N."/>
            <person name="Israni S."/>
            <person name="Dalin E."/>
            <person name="Tice H."/>
            <person name="Pitluck S."/>
            <person name="Chain P."/>
            <person name="Malfatti S."/>
            <person name="Shin M."/>
            <person name="Vergez L."/>
            <person name="Schmutz J."/>
            <person name="Larimer F."/>
            <person name="Land M."/>
            <person name="Hauser L."/>
            <person name="Kyrpides N."/>
            <person name="Lykidis A."/>
            <person name="Tiedje J."/>
            <person name="Richardson P."/>
        </authorList>
    </citation>
    <scope>NUCLEOTIDE SEQUENCE [LARGE SCALE GENOMIC DNA]</scope>
    <source>
        <strain>W3-18-1</strain>
    </source>
</reference>
<keyword id="KW-0808">Transferase</keyword>
<keyword id="KW-0819">tRNA processing</keyword>